<protein>
    <recommendedName>
        <fullName evidence="6">Squalene synthase 8</fullName>
        <shortName evidence="8">PgSS8</shortName>
        <shortName evidence="8">SQS 8</shortName>
        <ecNumber evidence="3">2.5.1.21</ecNumber>
    </recommendedName>
    <alternativeName>
        <fullName evidence="8">FPP:FPP farnesyltransferase SS8</fullName>
    </alternativeName>
    <alternativeName>
        <fullName evidence="8">Farnesyl-diphosphate farnesyltransferase SS8</fullName>
    </alternativeName>
</protein>
<comment type="function">
    <text evidence="2 5 7">Component of the triterpene saponins (e.g. ginsenosides or panaxosides) and phytosterols biosynthetic pathways (PubMed:27746309, PubMed:29378087). Catalyzes the biosynthesis of squalene (By similarity).</text>
</comment>
<comment type="catalytic activity">
    <reaction evidence="3">
        <text>2 (2E,6E)-farnesyl diphosphate + NADH + H(+) = squalene + 2 diphosphate + NAD(+)</text>
        <dbReference type="Rhea" id="RHEA:32299"/>
        <dbReference type="ChEBI" id="CHEBI:15378"/>
        <dbReference type="ChEBI" id="CHEBI:15440"/>
        <dbReference type="ChEBI" id="CHEBI:33019"/>
        <dbReference type="ChEBI" id="CHEBI:57540"/>
        <dbReference type="ChEBI" id="CHEBI:57945"/>
        <dbReference type="ChEBI" id="CHEBI:175763"/>
        <dbReference type="EC" id="2.5.1.21"/>
    </reaction>
    <physiologicalReaction direction="left-to-right" evidence="1">
        <dbReference type="Rhea" id="RHEA:32300"/>
    </physiologicalReaction>
</comment>
<comment type="catalytic activity">
    <reaction evidence="3">
        <text>2 (2E,6E)-farnesyl diphosphate + NADPH + H(+) = squalene + 2 diphosphate + NADP(+)</text>
        <dbReference type="Rhea" id="RHEA:32295"/>
        <dbReference type="ChEBI" id="CHEBI:15378"/>
        <dbReference type="ChEBI" id="CHEBI:15440"/>
        <dbReference type="ChEBI" id="CHEBI:33019"/>
        <dbReference type="ChEBI" id="CHEBI:57783"/>
        <dbReference type="ChEBI" id="CHEBI:58349"/>
        <dbReference type="ChEBI" id="CHEBI:175763"/>
        <dbReference type="EC" id="2.5.1.21"/>
    </reaction>
    <physiologicalReaction direction="left-to-right" evidence="1">
        <dbReference type="Rhea" id="RHEA:32296"/>
    </physiologicalReaction>
</comment>
<comment type="cofactor">
    <cofactor evidence="3">
        <name>Mg(2+)</name>
        <dbReference type="ChEBI" id="CHEBI:18420"/>
    </cofactor>
    <cofactor evidence="3">
        <name>Mn(2+)</name>
        <dbReference type="ChEBI" id="CHEBI:29035"/>
    </cofactor>
</comment>
<comment type="pathway">
    <text evidence="3">Terpene metabolism; lanosterol biosynthesis; lanosterol from farnesyl diphosphate: step 1/3.</text>
</comment>
<comment type="subcellular location">
    <subcellularLocation>
        <location evidence="3">Endoplasmic reticulum</location>
    </subcellularLocation>
</comment>
<comment type="induction">
    <text evidence="4 5">Induced methyl jasmonate (MeJA) in adventitious roots (PubMed:25642758). Induced by A.niger mycelium-derived elicitor, thus improving ginsenosides production in adventitious roots culture (PubMed:27746309).</text>
</comment>
<comment type="similarity">
    <text evidence="8">Belongs to the phytoene/squalene synthase family.</text>
</comment>
<dbReference type="EC" id="2.5.1.21" evidence="3"/>
<dbReference type="EMBL" id="KP689318">
    <property type="protein sequence ID" value="AJK30630.1"/>
    <property type="molecule type" value="mRNA"/>
</dbReference>
<dbReference type="EMBL" id="KP689319">
    <property type="protein sequence ID" value="AJK30631.1"/>
    <property type="molecule type" value="mRNA"/>
</dbReference>
<dbReference type="SMR" id="A0A1P7Y0C9"/>
<dbReference type="UniPathway" id="UPA00767">
    <property type="reaction ID" value="UER00751"/>
</dbReference>
<dbReference type="GO" id="GO:0005789">
    <property type="term" value="C:endoplasmic reticulum membrane"/>
    <property type="evidence" value="ECO:0007669"/>
    <property type="project" value="TreeGrafter"/>
</dbReference>
<dbReference type="GO" id="GO:0051996">
    <property type="term" value="F:squalene synthase [NAD(P)H] activity"/>
    <property type="evidence" value="ECO:0007669"/>
    <property type="project" value="UniProtKB-EC"/>
</dbReference>
<dbReference type="GO" id="GO:0045338">
    <property type="term" value="P:farnesyl diphosphate metabolic process"/>
    <property type="evidence" value="ECO:0007669"/>
    <property type="project" value="InterPro"/>
</dbReference>
<dbReference type="GO" id="GO:0008299">
    <property type="term" value="P:isoprenoid biosynthetic process"/>
    <property type="evidence" value="ECO:0007669"/>
    <property type="project" value="UniProtKB-KW"/>
</dbReference>
<dbReference type="GO" id="GO:0009753">
    <property type="term" value="P:response to jasmonic acid"/>
    <property type="evidence" value="ECO:0000270"/>
    <property type="project" value="UniProtKB"/>
</dbReference>
<dbReference type="GO" id="GO:0002238">
    <property type="term" value="P:response to molecule of fungal origin"/>
    <property type="evidence" value="ECO:0000270"/>
    <property type="project" value="UniProtKB"/>
</dbReference>
<dbReference type="CDD" id="cd00683">
    <property type="entry name" value="Trans_IPPS_HH"/>
    <property type="match status" value="1"/>
</dbReference>
<dbReference type="FunFam" id="1.10.600.10:FF:000012">
    <property type="entry name" value="Squalene synthase 1"/>
    <property type="match status" value="1"/>
</dbReference>
<dbReference type="Gene3D" id="1.10.600.10">
    <property type="entry name" value="Farnesyl Diphosphate Synthase"/>
    <property type="match status" value="1"/>
</dbReference>
<dbReference type="InterPro" id="IPR008949">
    <property type="entry name" value="Isoprenoid_synthase_dom_sf"/>
</dbReference>
<dbReference type="InterPro" id="IPR002060">
    <property type="entry name" value="Squ/phyt_synthse"/>
</dbReference>
<dbReference type="InterPro" id="IPR006449">
    <property type="entry name" value="Squal_synth-like"/>
</dbReference>
<dbReference type="InterPro" id="IPR019845">
    <property type="entry name" value="Squalene/phytoene_synthase_CS"/>
</dbReference>
<dbReference type="InterPro" id="IPR044844">
    <property type="entry name" value="Trans_IPPS_euk-type"/>
</dbReference>
<dbReference type="InterPro" id="IPR033904">
    <property type="entry name" value="Trans_IPPS_HH"/>
</dbReference>
<dbReference type="NCBIfam" id="TIGR01559">
    <property type="entry name" value="squal_synth"/>
    <property type="match status" value="1"/>
</dbReference>
<dbReference type="PANTHER" id="PTHR11626">
    <property type="entry name" value="FARNESYL-DIPHOSPHATE FARNESYLTRANSFERASE"/>
    <property type="match status" value="1"/>
</dbReference>
<dbReference type="PANTHER" id="PTHR11626:SF2">
    <property type="entry name" value="SQUALENE SYNTHASE"/>
    <property type="match status" value="1"/>
</dbReference>
<dbReference type="Pfam" id="PF00494">
    <property type="entry name" value="SQS_PSY"/>
    <property type="match status" value="1"/>
</dbReference>
<dbReference type="SFLD" id="SFLDS00005">
    <property type="entry name" value="Isoprenoid_Synthase_Type_I"/>
    <property type="match status" value="1"/>
</dbReference>
<dbReference type="SFLD" id="SFLDG01018">
    <property type="entry name" value="Squalene/Phytoene_Synthase_Lik"/>
    <property type="match status" value="1"/>
</dbReference>
<dbReference type="SUPFAM" id="SSF48576">
    <property type="entry name" value="Terpenoid synthases"/>
    <property type="match status" value="1"/>
</dbReference>
<dbReference type="PROSITE" id="PS01044">
    <property type="entry name" value="SQUALEN_PHYTOEN_SYN_1"/>
    <property type="match status" value="1"/>
</dbReference>
<dbReference type="PROSITE" id="PS01045">
    <property type="entry name" value="SQUALEN_PHYTOEN_SYN_2"/>
    <property type="match status" value="1"/>
</dbReference>
<reference key="1">
    <citation type="journal article" date="2015" name="Int. J. Mol. Sci.">
        <title>Transcriptome analysis of methyl jasmonate-elicited Panax ginseng adventitious roots to discover putative ginsenoside biosynthesis and transport genes.</title>
        <authorList>
            <person name="Cao H."/>
            <person name="Nuruzzaman M."/>
            <person name="Xiu H."/>
            <person name="Huang J."/>
            <person name="Wu K."/>
            <person name="Chen X."/>
            <person name="Li J."/>
            <person name="Wang L."/>
            <person name="Jeong J.-H."/>
            <person name="Park S.-J."/>
            <person name="Yang F."/>
            <person name="Luo J."/>
            <person name="Luo Z."/>
        </authorList>
    </citation>
    <scope>NUCLEOTIDE SEQUENCE [LARGE SCALE MRNA]</scope>
    <scope>INDUCTION BY METHYL JASMONATE</scope>
    <source>
        <strain>cv. Damaya</strain>
    </source>
</reference>
<reference key="2">
    <citation type="journal article" date="2016" name="J. Biotechnol.">
        <title>Fungal elicitors enhance ginsenosides biosynthesis, expression of functional genes as well as signal molecules accumulation in adventitious roots of Panax ginseng C. A. Mey.</title>
        <authorList>
            <person name="Li J."/>
            <person name="Liu S."/>
            <person name="Wang J."/>
            <person name="Li J."/>
            <person name="Liu D."/>
            <person name="Li J."/>
            <person name="Gao W."/>
        </authorList>
    </citation>
    <scope>FUNCTION</scope>
    <scope>INDUCTION BY ASPERGILLUS NIGER</scope>
</reference>
<reference key="3">
    <citation type="journal article" date="2018" name="Biotechnol. Appl. Biochem.">
        <title>Advances in ginsenoside biosynthesis and metabolic regulation.</title>
        <authorList>
            <person name="Lu J."/>
            <person name="Li J."/>
            <person name="Wang S."/>
            <person name="Yao L."/>
            <person name="Liang W."/>
            <person name="Wang J."/>
            <person name="Gao W."/>
        </authorList>
    </citation>
    <scope>REVIEW</scope>
</reference>
<reference key="4">
    <citation type="journal article" date="2018" name="Molecules">
        <title>Progress on the studies of the key enzymes of ginsenoside biosynthesis.</title>
        <authorList>
            <person name="Yang J.-L."/>
            <person name="Hu Z.-F."/>
            <person name="Zhang T.-T."/>
            <person name="Gu A.-D."/>
            <person name="Gong T."/>
            <person name="Zhu P."/>
        </authorList>
    </citation>
    <scope>REVIEW</scope>
</reference>
<organism>
    <name type="scientific">Panax ginseng</name>
    <name type="common">Korean ginseng</name>
    <dbReference type="NCBI Taxonomy" id="4054"/>
    <lineage>
        <taxon>Eukaryota</taxon>
        <taxon>Viridiplantae</taxon>
        <taxon>Streptophyta</taxon>
        <taxon>Embryophyta</taxon>
        <taxon>Tracheophyta</taxon>
        <taxon>Spermatophyta</taxon>
        <taxon>Magnoliopsida</taxon>
        <taxon>eudicotyledons</taxon>
        <taxon>Gunneridae</taxon>
        <taxon>Pentapetalae</taxon>
        <taxon>asterids</taxon>
        <taxon>campanulids</taxon>
        <taxon>Apiales</taxon>
        <taxon>Araliaceae</taxon>
        <taxon>Panax</taxon>
    </lineage>
</organism>
<name>SQS8_PANGI</name>
<gene>
    <name evidence="6" type="primary">SS8</name>
</gene>
<accession>A0A1P7Y0C9</accession>
<sequence length="391" mass="44481">MGSLGAILKHPDDFYPLLKLKIAARHAEKQIPSEPHWAFCYSMLHKVSRSFGLVIQQLGPQLRDAVCIFYLVLRALDTVEDDTSISTEVKVPIVMAFHCHIYDNDWHFSCGTKEYKVLMDEFHHVSNAFLDLGSSYKEAIEDITMRMGAGMAKFICKEVETIDDYDEYCHYVAGLVGLGLSKLFHASGAEDLATDSLSNSMGLFLQKTNIIRDYLEDINEIPKSRMFWPRQIWSKYVDKLEDLKYEENSAKAVQCLNDMVTDALVHAEDCLKYMSDLRGPAIFRFCAIPQIMAIGTLALCFNNTQVFRGVVKMRRGLTAKVIDQTKTMSDVYGAFFDFSCLLKSKVDNNDPNATKTLSRLEAIQKTCKESGTLSKRFCVFDFPLETIFYRV</sequence>
<keyword id="KW-0256">Endoplasmic reticulum</keyword>
<keyword id="KW-0414">Isoprene biosynthesis</keyword>
<keyword id="KW-0460">Magnesium</keyword>
<keyword id="KW-0511">Multifunctional enzyme</keyword>
<keyword id="KW-0521">NADP</keyword>
<keyword id="KW-0808">Transferase</keyword>
<evidence type="ECO:0000250" key="1">
    <source>
        <dbReference type="UniProtKB" id="D2K762"/>
    </source>
</evidence>
<evidence type="ECO:0000250" key="2">
    <source>
        <dbReference type="UniProtKB" id="O48666"/>
    </source>
</evidence>
<evidence type="ECO:0000250" key="3">
    <source>
        <dbReference type="UniProtKB" id="P53799"/>
    </source>
</evidence>
<evidence type="ECO:0000269" key="4">
    <source>
    </source>
</evidence>
<evidence type="ECO:0000269" key="5">
    <source>
    </source>
</evidence>
<evidence type="ECO:0000303" key="6">
    <source>
    </source>
</evidence>
<evidence type="ECO:0000303" key="7">
    <source>
    </source>
</evidence>
<evidence type="ECO:0000305" key="8"/>
<feature type="chain" id="PRO_0000446955" description="Squalene synthase 8">
    <location>
        <begin position="1"/>
        <end position="391"/>
    </location>
</feature>
<proteinExistence type="evidence at transcript level"/>